<accession>O70492</accession>
<name>SNX3_MOUSE</name>
<gene>
    <name type="primary">Snx3</name>
</gene>
<proteinExistence type="evidence at protein level"/>
<organism>
    <name type="scientific">Mus musculus</name>
    <name type="common">Mouse</name>
    <dbReference type="NCBI Taxonomy" id="10090"/>
    <lineage>
        <taxon>Eukaryota</taxon>
        <taxon>Metazoa</taxon>
        <taxon>Chordata</taxon>
        <taxon>Craniata</taxon>
        <taxon>Vertebrata</taxon>
        <taxon>Euteleostomi</taxon>
        <taxon>Mammalia</taxon>
        <taxon>Eutheria</taxon>
        <taxon>Euarchontoglires</taxon>
        <taxon>Glires</taxon>
        <taxon>Rodentia</taxon>
        <taxon>Myomorpha</taxon>
        <taxon>Muroidea</taxon>
        <taxon>Muridae</taxon>
        <taxon>Murinae</taxon>
        <taxon>Mus</taxon>
        <taxon>Mus</taxon>
    </lineage>
</organism>
<dbReference type="EMBL" id="AF062482">
    <property type="protein sequence ID" value="AAC16017.1"/>
    <property type="molecule type" value="mRNA"/>
</dbReference>
<dbReference type="SMR" id="O70492"/>
<dbReference type="FunCoup" id="O70492">
    <property type="interactions" value="2407"/>
</dbReference>
<dbReference type="IntAct" id="O70492">
    <property type="interactions" value="1"/>
</dbReference>
<dbReference type="STRING" id="10090.ENSMUSP00000019939"/>
<dbReference type="GlyGen" id="O70492">
    <property type="glycosylation" value="1 site, 1 O-linked glycan (1 site)"/>
</dbReference>
<dbReference type="iPTMnet" id="O70492"/>
<dbReference type="PhosphoSitePlus" id="O70492"/>
<dbReference type="SwissPalm" id="O70492"/>
<dbReference type="REPRODUCTION-2DPAGE" id="O70492"/>
<dbReference type="CPTAC" id="non-CPTAC-3748"/>
<dbReference type="jPOST" id="O70492"/>
<dbReference type="PaxDb" id="10090-ENSMUSP00000019939"/>
<dbReference type="PeptideAtlas" id="O70492"/>
<dbReference type="ProteomicsDB" id="261472"/>
<dbReference type="Pumba" id="O70492"/>
<dbReference type="AGR" id="MGI:1860188"/>
<dbReference type="MGI" id="MGI:1860188">
    <property type="gene designation" value="Snx3"/>
</dbReference>
<dbReference type="eggNOG" id="KOG2527">
    <property type="taxonomic scope" value="Eukaryota"/>
</dbReference>
<dbReference type="InParanoid" id="O70492"/>
<dbReference type="PhylomeDB" id="O70492"/>
<dbReference type="Reactome" id="R-MMU-3238698">
    <property type="pathway name" value="WNT ligand biogenesis and trafficking"/>
</dbReference>
<dbReference type="Reactome" id="R-MMU-5689880">
    <property type="pathway name" value="Ub-specific processing proteases"/>
</dbReference>
<dbReference type="ChiTaRS" id="Snx3">
    <property type="organism name" value="mouse"/>
</dbReference>
<dbReference type="PRO" id="PR:O70492"/>
<dbReference type="Proteomes" id="UP000000589">
    <property type="component" value="Unplaced"/>
</dbReference>
<dbReference type="RNAct" id="O70492">
    <property type="molecule type" value="protein"/>
</dbReference>
<dbReference type="GO" id="GO:0030136">
    <property type="term" value="C:clathrin-coated vesicle"/>
    <property type="evidence" value="ECO:0000250"/>
    <property type="project" value="UniProtKB"/>
</dbReference>
<dbReference type="GO" id="GO:0005769">
    <property type="term" value="C:early endosome"/>
    <property type="evidence" value="ECO:0000250"/>
    <property type="project" value="UniProtKB"/>
</dbReference>
<dbReference type="GO" id="GO:0032009">
    <property type="term" value="C:early phagosome"/>
    <property type="evidence" value="ECO:0000250"/>
    <property type="project" value="UniProtKB"/>
</dbReference>
<dbReference type="GO" id="GO:0010008">
    <property type="term" value="C:endosome membrane"/>
    <property type="evidence" value="ECO:0000250"/>
    <property type="project" value="UniProtKB"/>
</dbReference>
<dbReference type="GO" id="GO:0080025">
    <property type="term" value="F:phosphatidylinositol-3,5-bisphosphate binding"/>
    <property type="evidence" value="ECO:0000314"/>
    <property type="project" value="UniProtKB"/>
</dbReference>
<dbReference type="GO" id="GO:0032266">
    <property type="term" value="F:phosphatidylinositol-3-phosphate binding"/>
    <property type="evidence" value="ECO:0000314"/>
    <property type="project" value="UniProtKB"/>
</dbReference>
<dbReference type="GO" id="GO:0070273">
    <property type="term" value="F:phosphatidylinositol-4-phosphate binding"/>
    <property type="evidence" value="ECO:0000314"/>
    <property type="project" value="UniProtKB"/>
</dbReference>
<dbReference type="GO" id="GO:0010314">
    <property type="term" value="F:phosphatidylinositol-5-phosphate binding"/>
    <property type="evidence" value="ECO:0000314"/>
    <property type="project" value="UniProtKB"/>
</dbReference>
<dbReference type="GO" id="GO:1905394">
    <property type="term" value="F:retromer complex binding"/>
    <property type="evidence" value="ECO:0000250"/>
    <property type="project" value="UniProtKB"/>
</dbReference>
<dbReference type="GO" id="GO:0006783">
    <property type="term" value="P:heme biosynthetic process"/>
    <property type="evidence" value="ECO:0000266"/>
    <property type="project" value="MGI"/>
</dbReference>
<dbReference type="GO" id="GO:0042541">
    <property type="term" value="P:hemoglobin biosynthetic process"/>
    <property type="evidence" value="ECO:0000315"/>
    <property type="project" value="MGI"/>
</dbReference>
<dbReference type="GO" id="GO:0050765">
    <property type="term" value="P:negative regulation of phagocytosis"/>
    <property type="evidence" value="ECO:0000250"/>
    <property type="project" value="UniProtKB"/>
</dbReference>
<dbReference type="GO" id="GO:0010976">
    <property type="term" value="P:positive regulation of neuron projection development"/>
    <property type="evidence" value="ECO:0000315"/>
    <property type="project" value="UniProtKB"/>
</dbReference>
<dbReference type="GO" id="GO:0022615">
    <property type="term" value="P:protein to membrane docking"/>
    <property type="evidence" value="ECO:0000250"/>
    <property type="project" value="UniProtKB"/>
</dbReference>
<dbReference type="GO" id="GO:0033157">
    <property type="term" value="P:regulation of intracellular protein transport"/>
    <property type="evidence" value="ECO:0000315"/>
    <property type="project" value="MGI"/>
</dbReference>
<dbReference type="GO" id="GO:0051246">
    <property type="term" value="P:regulation of protein metabolic process"/>
    <property type="evidence" value="ECO:0000315"/>
    <property type="project" value="MGI"/>
</dbReference>
<dbReference type="GO" id="GO:0030111">
    <property type="term" value="P:regulation of Wnt signaling pathway"/>
    <property type="evidence" value="ECO:0000250"/>
    <property type="project" value="UniProtKB"/>
</dbReference>
<dbReference type="GO" id="GO:0033572">
    <property type="term" value="P:transferrin transport"/>
    <property type="evidence" value="ECO:0000315"/>
    <property type="project" value="MGI"/>
</dbReference>
<dbReference type="CDD" id="cd07293">
    <property type="entry name" value="PX_SNX3"/>
    <property type="match status" value="1"/>
</dbReference>
<dbReference type="FunFam" id="3.30.1520.10:FF:000002">
    <property type="entry name" value="Sorting nexin 12"/>
    <property type="match status" value="1"/>
</dbReference>
<dbReference type="Gene3D" id="3.30.1520.10">
    <property type="entry name" value="Phox-like domain"/>
    <property type="match status" value="1"/>
</dbReference>
<dbReference type="InterPro" id="IPR001683">
    <property type="entry name" value="PX_dom"/>
</dbReference>
<dbReference type="InterPro" id="IPR036871">
    <property type="entry name" value="PX_dom_sf"/>
</dbReference>
<dbReference type="InterPro" id="IPR042137">
    <property type="entry name" value="PX_SNX3_Vert"/>
</dbReference>
<dbReference type="InterPro" id="IPR051074">
    <property type="entry name" value="Sorting_Nexin"/>
</dbReference>
<dbReference type="PANTHER" id="PTHR45963">
    <property type="entry name" value="RE52028P"/>
    <property type="match status" value="1"/>
</dbReference>
<dbReference type="PANTHER" id="PTHR45963:SF1">
    <property type="entry name" value="SORTING NEXIN-3"/>
    <property type="match status" value="1"/>
</dbReference>
<dbReference type="Pfam" id="PF00787">
    <property type="entry name" value="PX"/>
    <property type="match status" value="1"/>
</dbReference>
<dbReference type="SMART" id="SM00312">
    <property type="entry name" value="PX"/>
    <property type="match status" value="1"/>
</dbReference>
<dbReference type="SUPFAM" id="SSF64268">
    <property type="entry name" value="PX domain"/>
    <property type="match status" value="1"/>
</dbReference>
<dbReference type="PROSITE" id="PS50195">
    <property type="entry name" value="PX"/>
    <property type="match status" value="1"/>
</dbReference>
<evidence type="ECO:0000250" key="1">
    <source>
        <dbReference type="UniProtKB" id="O60493"/>
    </source>
</evidence>
<evidence type="ECO:0000250" key="2">
    <source>
        <dbReference type="UniProtKB" id="Q96L94"/>
    </source>
</evidence>
<evidence type="ECO:0000255" key="3">
    <source>
        <dbReference type="PROSITE-ProRule" id="PRU00147"/>
    </source>
</evidence>
<evidence type="ECO:0000269" key="4">
    <source>
    </source>
</evidence>
<evidence type="ECO:0000269" key="5">
    <source>
    </source>
</evidence>
<evidence type="ECO:0000269" key="6">
    <source>
    </source>
</evidence>
<evidence type="ECO:0000305" key="7"/>
<evidence type="ECO:0007744" key="8">
    <source>
    </source>
</evidence>
<comment type="function">
    <text evidence="1 4 6">Phosphoinositide-binding protein required for multivesicular body formation. Specifically binds phosphatidylinositol 3-phosphate (PtdIns(P3)). Can also bind phosphatidylinositol 4-phosphate (PtdIns(P4)), phosphatidylinositol 5-phosphate (PtdIns(P5)) and phosphatidylinositol 3,5-biphosphate (PtdIns(3,5)P2) (PubMed:19576982). Plays a role in protein transport between cellular compartments. Together with RAB7A facilitates endosome membrane association of the retromer cargo-selective subcomplex (CSC). May act in part as component of the SNX3-retromer complex which mediates the retrograde endosome-to-TGN transport of WLS distinct from the SNX-BAR retromer pathway (By similarity). Promotes stability and cell surface expression of epithelial sodium channel (ENAC) subunits SCNN1A and SCNN1G (PubMed:18632802). Not involved in EGFR degradation. Involved in the regulation of phagocytosis in dendritic cells possibly by regulating EEA1 recruitment to the nascent phagosomes (By similarity). Involved in iron homeostasis through regulation of endocytic recycling of the transferrin receptor Tfrc presuambly by delivering the transferrin:transferrin receptor complex to recycling endosomes; the function may involve the CSC retromer subcomplex (PubMed:23416069). Involved in regulation of neurite outgrowth in primary neurons (PubMed:19576982).</text>
</comment>
<comment type="subunit">
    <text evidence="1 4 6">Interacts with VPS26A, VPS29 (By similarity). Interacts with VPS35; the interaction with VPS35 is direct (PubMed:23416069). The association with the retromer CSC subcomplex subunits is proposed to represent a functional distinct retromer variant described as SNX3-retromer complex (By similarity). Interacts with USP10 and SCNN1A (PubMed:18632802). Interacts with TRFC (PubMed:23416069). Interacts with SNX8; 2 molecules of SNX8 seems to associate with one molecule of SNX3. Interacts with PTPRU (By similarity). Interacts with MON2 and DOP1B.</text>
</comment>
<comment type="subcellular location">
    <subcellularLocation>
        <location evidence="6">Early endosome</location>
    </subcellularLocation>
    <subcellularLocation>
        <location evidence="1">Cytoplasmic vesicle</location>
        <location evidence="1">Phagosome</location>
    </subcellularLocation>
    <text evidence="1 6">Colocalizes to clathrin-coated endosomal vesicles morphologically distinct from retromer-decorated non-branched endosomal tubule structures. Colocalizes with EEA1 on nascent phagosomes in dendritic cells but competes with EEA1 for binding to phagosomal membrane (By similarity).</text>
</comment>
<comment type="tissue specificity">
    <text evidence="6">Highly expressed in developing red cells and hematopoietic tissues (PubMed:23416069).</text>
</comment>
<comment type="domain">
    <text>The PX domain mediates specific binding to phosphatidylinositol 3-phosphate (PtdIns(P3)).</text>
</comment>
<comment type="PTM">
    <text evidence="4">Ubiquitinated, leading to its proteasomal degradation. Deubiquitinated by USP10.</text>
</comment>
<comment type="similarity">
    <text evidence="7">Belongs to the sorting nexin family.</text>
</comment>
<sequence length="162" mass="18757">MAETVADTRRLITKPQNLNDAYGPPSNFLEIDVSNPQTVGVGRGRFTTYEIRVKTNLPIFKLKESTVRRRYSDFEWLRSELERESKVVVPPLPGKAFLRHVPFRGDDGIFDDNFIEERKQGLEQFINKVAGHPLAQNERCLHMFLQDEIIDKSYTPSKIRHA</sequence>
<feature type="initiator methionine" description="Removed" evidence="1">
    <location>
        <position position="1"/>
    </location>
</feature>
<feature type="chain" id="PRO_0000213841" description="Sorting nexin-3">
    <location>
        <begin position="2"/>
        <end position="162"/>
    </location>
</feature>
<feature type="domain" description="PX" evidence="3">
    <location>
        <begin position="27"/>
        <end position="151"/>
    </location>
</feature>
<feature type="region of interest" description="Binds predominantly to PtdIns(P5) and weaker to PtdIns(P3) abd PtdIns(P4); involved in neurite outgrowth regulation" evidence="5">
    <location>
        <begin position="147"/>
        <end position="162"/>
    </location>
</feature>
<feature type="binding site" evidence="2">
    <location>
        <position position="70"/>
    </location>
    <ligand>
        <name>a 1,2-diacyl-sn-glycero-3-phospho-(1D-myo-inositol-3-phosphate)</name>
        <dbReference type="ChEBI" id="CHEBI:58088"/>
    </ligand>
</feature>
<feature type="binding site" evidence="2">
    <location>
        <position position="72"/>
    </location>
    <ligand>
        <name>a 1,2-diacyl-sn-glycero-3-phospho-(1D-myo-inositol-3-phosphate)</name>
        <dbReference type="ChEBI" id="CHEBI:58088"/>
    </ligand>
</feature>
<feature type="binding site" evidence="2">
    <location>
        <position position="95"/>
    </location>
    <ligand>
        <name>a 1,2-diacyl-sn-glycero-3-phospho-(1D-myo-inositol-3-phosphate)</name>
        <dbReference type="ChEBI" id="CHEBI:58088"/>
    </ligand>
</feature>
<feature type="binding site" evidence="2">
    <location>
        <position position="118"/>
    </location>
    <ligand>
        <name>a 1,2-diacyl-sn-glycero-3-phospho-(1D-myo-inositol-3-phosphate)</name>
        <dbReference type="ChEBI" id="CHEBI:58088"/>
    </ligand>
</feature>
<feature type="modified residue" description="N-acetylalanine" evidence="1">
    <location>
        <position position="2"/>
    </location>
</feature>
<feature type="modified residue" description="Omega-N-methylarginine" evidence="8">
    <location>
        <position position="43"/>
    </location>
</feature>
<feature type="modified residue" description="Phosphoserine" evidence="1">
    <location>
        <position position="72"/>
    </location>
</feature>
<feature type="cross-link" description="Glycyl lysine isopeptide (Lys-Gly) (interchain with G-Cter in SUMO2)" evidence="1">
    <location>
        <position position="95"/>
    </location>
</feature>
<feature type="mutagenesis site" description="Abolishes phosphoinositide-binding of C-terminus; when associated with A-158, A-160 and A-161." evidence="5">
    <original>K</original>
    <variation>A</variation>
    <location>
        <position position="152"/>
    </location>
</feature>
<feature type="mutagenesis site" description="Abolishes phosphoinositide-binding of C-terminus; when associated with A-152, A-160 and A-161." evidence="5">
    <original>K</original>
    <variation>A</variation>
    <location>
        <position position="158"/>
    </location>
</feature>
<feature type="mutagenesis site" description="Abolishes phosphoinositide-binding of C-terminus; when associated with A-152, A-160 and A-161." evidence="5">
    <original>R</original>
    <variation>A</variation>
    <location>
        <position position="160"/>
    </location>
</feature>
<feature type="mutagenesis site" description="Abolishes phosphoinositide-binding of C-terminus; when associated with A-152, A-158 and A-160." evidence="5">
    <original>H</original>
    <variation>A</variation>
    <location>
        <position position="161"/>
    </location>
</feature>
<protein>
    <recommendedName>
        <fullName>Sorting nexin-3</fullName>
    </recommendedName>
    <alternativeName>
        <fullName>SDP3 protein</fullName>
    </alternativeName>
</protein>
<reference key="1">
    <citation type="submission" date="1998-05" db="EMBL/GenBank/DDBJ databases">
        <authorList>
            <person name="Xu Y."/>
            <person name="Wong S.H."/>
            <person name="Zhang T."/>
            <person name="Hong W."/>
        </authorList>
    </citation>
    <scope>NUCLEOTIDE SEQUENCE [MRNA]</scope>
</reference>
<reference key="2">
    <citation type="journal article" date="2008" name="Am. J. Physiol.">
        <title>Vasopressin-inducible ubiquitin-specific protease 10 increases ENaC cell surface expression by deubiquitylating and stabilizing sorting nexin 3.</title>
        <authorList>
            <person name="Boulkroun S."/>
            <person name="Ruffieux-Daidie D."/>
            <person name="Vitagliano J.J."/>
            <person name="Poirot O."/>
            <person name="Charles R.P."/>
            <person name="Lagnaz D."/>
            <person name="Firsov D."/>
            <person name="Kellenberger S."/>
            <person name="Staub O."/>
        </authorList>
    </citation>
    <scope>FUNCTION</scope>
    <scope>UBIQUITINATION</scope>
    <scope>INTERACTION WITH USP10 AND SCNN1A</scope>
</reference>
<reference key="3">
    <citation type="journal article" date="2009" name="Cell. Signal.">
        <title>Sorting nexin 3, a protein upregulated by lithium, contains a novel phosphatidylinositol-binding sequence and mediates neurite outgrowth in N1E-115 cells.</title>
        <authorList>
            <person name="Mizutani R."/>
            <person name="Yamauchi J."/>
            <person name="Kusakawa S."/>
            <person name="Nakamura K."/>
            <person name="Sanbe A."/>
            <person name="Torii T."/>
            <person name="Miyamoto Y."/>
            <person name="Tanoue A."/>
        </authorList>
    </citation>
    <scope>FUNCTION</scope>
    <scope>PHOSPHATIDYLINOSITOL-BINDING</scope>
    <scope>MUTAGENESIS OF LYS-152; LYS-158; ARG-160 AND HIS-161</scope>
</reference>
<reference key="4">
    <citation type="journal article" date="2009" name="Mol. Cell. Proteomics">
        <title>Large scale localization of protein phosphorylation by use of electron capture dissociation mass spectrometry.</title>
        <authorList>
            <person name="Sweet S.M."/>
            <person name="Bailey C.M."/>
            <person name="Cunningham D.L."/>
            <person name="Heath J.K."/>
            <person name="Cooper H.J."/>
        </authorList>
    </citation>
    <scope>IDENTIFICATION BY MASS SPECTROMETRY [LARGE SCALE ANALYSIS]</scope>
    <source>
        <tissue>Embryonic fibroblast</tissue>
    </source>
</reference>
<reference key="5">
    <citation type="journal article" date="2010" name="Cell">
        <title>A tissue-specific atlas of mouse protein phosphorylation and expression.</title>
        <authorList>
            <person name="Huttlin E.L."/>
            <person name="Jedrychowski M.P."/>
            <person name="Elias J.E."/>
            <person name="Goswami T."/>
            <person name="Rad R."/>
            <person name="Beausoleil S.A."/>
            <person name="Villen J."/>
            <person name="Haas W."/>
            <person name="Sowa M.E."/>
            <person name="Gygi S.P."/>
        </authorList>
    </citation>
    <scope>IDENTIFICATION BY MASS SPECTROMETRY [LARGE SCALE ANALYSIS]</scope>
    <source>
        <tissue>Brain</tissue>
        <tissue>Brown adipose tissue</tissue>
        <tissue>Heart</tissue>
        <tissue>Kidney</tissue>
        <tissue>Liver</tissue>
        <tissue>Lung</tissue>
        <tissue>Pancreas</tissue>
        <tissue>Spleen</tissue>
        <tissue>Testis</tissue>
    </source>
</reference>
<reference key="6">
    <citation type="journal article" date="2013" name="Cell Metab.">
        <title>Snx3 regulates recycling of the transferrin receptor and iron assimilation.</title>
        <authorList>
            <person name="Chen C."/>
            <person name="Garcia-Santos D."/>
            <person name="Ishikawa Y."/>
            <person name="Seguin A."/>
            <person name="Li L."/>
            <person name="Fegan K.H."/>
            <person name="Hildick-Smith G.J."/>
            <person name="Shah D.I."/>
            <person name="Cooney J.D."/>
            <person name="Chen W."/>
            <person name="King M.J."/>
            <person name="Yien Y.Y."/>
            <person name="Schultz I.J."/>
            <person name="Anderson H."/>
            <person name="Dalton A.J."/>
            <person name="Freedman M.L."/>
            <person name="Kingsley P.D."/>
            <person name="Palis J."/>
            <person name="Hattangadi S.M."/>
            <person name="Lodish H.F."/>
            <person name="Ward D.M."/>
            <person name="Kaplan J."/>
            <person name="Maeda T."/>
            <person name="Ponka P."/>
            <person name="Paw B.H."/>
        </authorList>
    </citation>
    <scope>FUNCTION</scope>
    <scope>TISSUE SPECIFICITY</scope>
    <scope>SUBCELLULAR LOCATION</scope>
    <scope>INTERACTION WITH TFRC AND VPS35</scope>
</reference>
<reference key="7">
    <citation type="journal article" date="2014" name="Mol. Cell. Proteomics">
        <title>Immunoaffinity enrichment and mass spectrometry analysis of protein methylation.</title>
        <authorList>
            <person name="Guo A."/>
            <person name="Gu H."/>
            <person name="Zhou J."/>
            <person name="Mulhern D."/>
            <person name="Wang Y."/>
            <person name="Lee K.A."/>
            <person name="Yang V."/>
            <person name="Aguiar M."/>
            <person name="Kornhauser J."/>
            <person name="Jia X."/>
            <person name="Ren J."/>
            <person name="Beausoleil S.A."/>
            <person name="Silva J.C."/>
            <person name="Vemulapalli V."/>
            <person name="Bedford M.T."/>
            <person name="Comb M.J."/>
        </authorList>
    </citation>
    <scope>METHYLATION [LARGE SCALE ANALYSIS] AT ARG-43</scope>
    <scope>IDENTIFICATION BY MASS SPECTROMETRY [LARGE SCALE ANALYSIS]</scope>
    <source>
        <tissue>Brain</tissue>
        <tissue>Embryo</tissue>
    </source>
</reference>
<keyword id="KW-0007">Acetylation</keyword>
<keyword id="KW-0968">Cytoplasmic vesicle</keyword>
<keyword id="KW-0967">Endosome</keyword>
<keyword id="KW-1017">Isopeptide bond</keyword>
<keyword id="KW-0446">Lipid-binding</keyword>
<keyword id="KW-0488">Methylation</keyword>
<keyword id="KW-0597">Phosphoprotein</keyword>
<keyword id="KW-0653">Protein transport</keyword>
<keyword id="KW-1185">Reference proteome</keyword>
<keyword id="KW-0813">Transport</keyword>
<keyword id="KW-0832">Ubl conjugation</keyword>